<sequence>MAKVSKRMKEISAKINAEKKYPVSEAFDLLREVSSVKFVESVDVSVALGVDPRKSDQVVRGASVLPNGTGKTVRVAVFAKGPAADAAKEAGAEVVGMEDLADEVKKGNMDFDVVIASPDSMRVVGQLGQILGPKGLMPNPKVGTVTMDVAKAVRDAKAGQVRYRVDKAGIIHTTIGKVNFTSDALKQNLERLLTDLKKAKPAVSKGIYLKKVSVSSTMGPGINVDFSDLNI</sequence>
<organism>
    <name type="scientific">Francisella tularensis subsp. tularensis (strain WY96-3418)</name>
    <dbReference type="NCBI Taxonomy" id="418136"/>
    <lineage>
        <taxon>Bacteria</taxon>
        <taxon>Pseudomonadati</taxon>
        <taxon>Pseudomonadota</taxon>
        <taxon>Gammaproteobacteria</taxon>
        <taxon>Thiotrichales</taxon>
        <taxon>Francisellaceae</taxon>
        <taxon>Francisella</taxon>
    </lineage>
</organism>
<dbReference type="EMBL" id="CP000608">
    <property type="protein sequence ID" value="ABO46198.1"/>
    <property type="molecule type" value="Genomic_DNA"/>
</dbReference>
<dbReference type="RefSeq" id="WP_003024805.1">
    <property type="nucleotide sequence ID" value="NC_009257.1"/>
</dbReference>
<dbReference type="SMR" id="A4IW96"/>
<dbReference type="KEGG" id="ftw:FTW_0231"/>
<dbReference type="HOGENOM" id="CLU_062853_0_0_6"/>
<dbReference type="GO" id="GO:0022625">
    <property type="term" value="C:cytosolic large ribosomal subunit"/>
    <property type="evidence" value="ECO:0007669"/>
    <property type="project" value="TreeGrafter"/>
</dbReference>
<dbReference type="GO" id="GO:0019843">
    <property type="term" value="F:rRNA binding"/>
    <property type="evidence" value="ECO:0007669"/>
    <property type="project" value="UniProtKB-UniRule"/>
</dbReference>
<dbReference type="GO" id="GO:0003735">
    <property type="term" value="F:structural constituent of ribosome"/>
    <property type="evidence" value="ECO:0007669"/>
    <property type="project" value="InterPro"/>
</dbReference>
<dbReference type="GO" id="GO:0000049">
    <property type="term" value="F:tRNA binding"/>
    <property type="evidence" value="ECO:0007669"/>
    <property type="project" value="UniProtKB-KW"/>
</dbReference>
<dbReference type="GO" id="GO:0006417">
    <property type="term" value="P:regulation of translation"/>
    <property type="evidence" value="ECO:0007669"/>
    <property type="project" value="UniProtKB-KW"/>
</dbReference>
<dbReference type="GO" id="GO:0006412">
    <property type="term" value="P:translation"/>
    <property type="evidence" value="ECO:0007669"/>
    <property type="project" value="UniProtKB-UniRule"/>
</dbReference>
<dbReference type="CDD" id="cd00403">
    <property type="entry name" value="Ribosomal_L1"/>
    <property type="match status" value="1"/>
</dbReference>
<dbReference type="FunFam" id="3.40.50.790:FF:000001">
    <property type="entry name" value="50S ribosomal protein L1"/>
    <property type="match status" value="1"/>
</dbReference>
<dbReference type="Gene3D" id="3.30.190.20">
    <property type="match status" value="1"/>
</dbReference>
<dbReference type="Gene3D" id="3.40.50.790">
    <property type="match status" value="1"/>
</dbReference>
<dbReference type="HAMAP" id="MF_01318_B">
    <property type="entry name" value="Ribosomal_uL1_B"/>
    <property type="match status" value="1"/>
</dbReference>
<dbReference type="InterPro" id="IPR005878">
    <property type="entry name" value="Ribosom_uL1_bac-type"/>
</dbReference>
<dbReference type="InterPro" id="IPR002143">
    <property type="entry name" value="Ribosomal_uL1"/>
</dbReference>
<dbReference type="InterPro" id="IPR023674">
    <property type="entry name" value="Ribosomal_uL1-like"/>
</dbReference>
<dbReference type="InterPro" id="IPR028364">
    <property type="entry name" value="Ribosomal_uL1/biogenesis"/>
</dbReference>
<dbReference type="InterPro" id="IPR016095">
    <property type="entry name" value="Ribosomal_uL1_3-a/b-sand"/>
</dbReference>
<dbReference type="InterPro" id="IPR023673">
    <property type="entry name" value="Ribosomal_uL1_CS"/>
</dbReference>
<dbReference type="NCBIfam" id="TIGR01169">
    <property type="entry name" value="rplA_bact"/>
    <property type="match status" value="1"/>
</dbReference>
<dbReference type="PANTHER" id="PTHR36427">
    <property type="entry name" value="54S RIBOSOMAL PROTEIN L1, MITOCHONDRIAL"/>
    <property type="match status" value="1"/>
</dbReference>
<dbReference type="PANTHER" id="PTHR36427:SF3">
    <property type="entry name" value="LARGE RIBOSOMAL SUBUNIT PROTEIN UL1M"/>
    <property type="match status" value="1"/>
</dbReference>
<dbReference type="Pfam" id="PF00687">
    <property type="entry name" value="Ribosomal_L1"/>
    <property type="match status" value="1"/>
</dbReference>
<dbReference type="PIRSF" id="PIRSF002155">
    <property type="entry name" value="Ribosomal_L1"/>
    <property type="match status" value="1"/>
</dbReference>
<dbReference type="SUPFAM" id="SSF56808">
    <property type="entry name" value="Ribosomal protein L1"/>
    <property type="match status" value="1"/>
</dbReference>
<dbReference type="PROSITE" id="PS01199">
    <property type="entry name" value="RIBOSOMAL_L1"/>
    <property type="match status" value="1"/>
</dbReference>
<proteinExistence type="inferred from homology"/>
<comment type="function">
    <text evidence="1">Binds directly to 23S rRNA. The L1 stalk is quite mobile in the ribosome, and is involved in E site tRNA release.</text>
</comment>
<comment type="function">
    <text evidence="1">Protein L1 is also a translational repressor protein, it controls the translation of the L11 operon by binding to its mRNA.</text>
</comment>
<comment type="subunit">
    <text evidence="1">Part of the 50S ribosomal subunit.</text>
</comment>
<comment type="similarity">
    <text evidence="1">Belongs to the universal ribosomal protein uL1 family.</text>
</comment>
<keyword id="KW-0678">Repressor</keyword>
<keyword id="KW-0687">Ribonucleoprotein</keyword>
<keyword id="KW-0689">Ribosomal protein</keyword>
<keyword id="KW-0694">RNA-binding</keyword>
<keyword id="KW-0699">rRNA-binding</keyword>
<keyword id="KW-0810">Translation regulation</keyword>
<keyword id="KW-0820">tRNA-binding</keyword>
<name>RL1_FRATW</name>
<accession>A4IW96</accession>
<reference key="1">
    <citation type="journal article" date="2007" name="PLoS ONE">
        <title>Complete genomic characterization of a pathogenic A.II strain of Francisella tularensis subspecies tularensis.</title>
        <authorList>
            <person name="Beckstrom-Sternberg S.M."/>
            <person name="Auerbach R.K."/>
            <person name="Godbole S."/>
            <person name="Pearson J.V."/>
            <person name="Beckstrom-Sternberg J.S."/>
            <person name="Deng Z."/>
            <person name="Munk C."/>
            <person name="Kubota K."/>
            <person name="Zhou Y."/>
            <person name="Bruce D."/>
            <person name="Noronha J."/>
            <person name="Scheuermann R.H."/>
            <person name="Wang A."/>
            <person name="Wei X."/>
            <person name="Wang J."/>
            <person name="Hao J."/>
            <person name="Wagner D.M."/>
            <person name="Brettin T.S."/>
            <person name="Brown N."/>
            <person name="Gilna P."/>
            <person name="Keim P.S."/>
        </authorList>
    </citation>
    <scope>NUCLEOTIDE SEQUENCE [LARGE SCALE GENOMIC DNA]</scope>
    <source>
        <strain>WY96-3418</strain>
    </source>
</reference>
<feature type="chain" id="PRO_0000308011" description="Large ribosomal subunit protein uL1">
    <location>
        <begin position="1"/>
        <end position="231"/>
    </location>
</feature>
<evidence type="ECO:0000255" key="1">
    <source>
        <dbReference type="HAMAP-Rule" id="MF_01318"/>
    </source>
</evidence>
<evidence type="ECO:0000305" key="2"/>
<protein>
    <recommendedName>
        <fullName evidence="1">Large ribosomal subunit protein uL1</fullName>
    </recommendedName>
    <alternativeName>
        <fullName evidence="2">50S ribosomal protein L1</fullName>
    </alternativeName>
</protein>
<gene>
    <name evidence="1" type="primary">rplA</name>
    <name type="ordered locus">FTW_0231</name>
</gene>